<protein>
    <recommendedName>
        <fullName evidence="1">GTPase Obg</fullName>
        <ecNumber evidence="1">3.6.5.-</ecNumber>
    </recommendedName>
    <alternativeName>
        <fullName evidence="1">GTP-binding protein Obg</fullName>
    </alternativeName>
</protein>
<gene>
    <name evidence="1" type="primary">obg</name>
    <name type="ordered locus">BAbS19_I17330</name>
</gene>
<name>OBG_BRUA1</name>
<sequence length="341" mass="36789">MKFLDQAKIYIRSGNGGAGAVSFRREKFLEFGGPDGGDGGRGGDVWVEAVDGLNTLIDYRYQQHFKAKTGMHGMGRNMTGGKGDDVVLRVPVGTQIFEEDNETLICDITEVGQRYRLAKGGNGGFGNLHFTTSTNRAPRRANPGQEGIERTIWLRLKLIADAGLVGLPNAGKSTFLASVTAAKPKIADYPFTTLHPNLGVARIDGREFVIADIPGLIEGASEGVGLGDRFLGHVERTRVLLHLVSAQEEDVAKAYQVIRGELEAYEHGLADKPEIVALSQVDTLDPETRKAKVKALKKACGCEPLLLSAVSHEGLNDTLRQLARIIDLSRAEEAGTAQAEE</sequence>
<proteinExistence type="inferred from homology"/>
<reference key="1">
    <citation type="journal article" date="2008" name="PLoS ONE">
        <title>Genome sequence of Brucella abortus vaccine strain S19 compared to virulent strains yields candidate virulence genes.</title>
        <authorList>
            <person name="Crasta O.R."/>
            <person name="Folkerts O."/>
            <person name="Fei Z."/>
            <person name="Mane S.P."/>
            <person name="Evans C."/>
            <person name="Martino-Catt S."/>
            <person name="Bricker B."/>
            <person name="Yu G."/>
            <person name="Du L."/>
            <person name="Sobral B.W."/>
        </authorList>
    </citation>
    <scope>NUCLEOTIDE SEQUENCE [LARGE SCALE GENOMIC DNA]</scope>
    <source>
        <strain>S19</strain>
    </source>
</reference>
<dbReference type="EC" id="3.6.5.-" evidence="1"/>
<dbReference type="EMBL" id="CP000887">
    <property type="protein sequence ID" value="ACD73215.1"/>
    <property type="molecule type" value="Genomic_DNA"/>
</dbReference>
<dbReference type="SMR" id="B2S806"/>
<dbReference type="KEGG" id="bmc:BAbS19_I17330"/>
<dbReference type="HOGENOM" id="CLU_011747_2_0_5"/>
<dbReference type="Proteomes" id="UP000002565">
    <property type="component" value="Chromosome 1"/>
</dbReference>
<dbReference type="GO" id="GO:0005737">
    <property type="term" value="C:cytoplasm"/>
    <property type="evidence" value="ECO:0007669"/>
    <property type="project" value="UniProtKB-SubCell"/>
</dbReference>
<dbReference type="GO" id="GO:0005525">
    <property type="term" value="F:GTP binding"/>
    <property type="evidence" value="ECO:0007669"/>
    <property type="project" value="UniProtKB-UniRule"/>
</dbReference>
<dbReference type="GO" id="GO:0003924">
    <property type="term" value="F:GTPase activity"/>
    <property type="evidence" value="ECO:0007669"/>
    <property type="project" value="UniProtKB-UniRule"/>
</dbReference>
<dbReference type="GO" id="GO:0000287">
    <property type="term" value="F:magnesium ion binding"/>
    <property type="evidence" value="ECO:0007669"/>
    <property type="project" value="InterPro"/>
</dbReference>
<dbReference type="GO" id="GO:0042254">
    <property type="term" value="P:ribosome biogenesis"/>
    <property type="evidence" value="ECO:0007669"/>
    <property type="project" value="UniProtKB-UniRule"/>
</dbReference>
<dbReference type="CDD" id="cd01898">
    <property type="entry name" value="Obg"/>
    <property type="match status" value="1"/>
</dbReference>
<dbReference type="FunFam" id="2.70.210.12:FF:000001">
    <property type="entry name" value="GTPase Obg"/>
    <property type="match status" value="1"/>
</dbReference>
<dbReference type="Gene3D" id="2.70.210.12">
    <property type="entry name" value="GTP1/OBG domain"/>
    <property type="match status" value="1"/>
</dbReference>
<dbReference type="Gene3D" id="3.40.50.300">
    <property type="entry name" value="P-loop containing nucleotide triphosphate hydrolases"/>
    <property type="match status" value="1"/>
</dbReference>
<dbReference type="HAMAP" id="MF_01454">
    <property type="entry name" value="GTPase_Obg"/>
    <property type="match status" value="1"/>
</dbReference>
<dbReference type="InterPro" id="IPR031167">
    <property type="entry name" value="G_OBG"/>
</dbReference>
<dbReference type="InterPro" id="IPR006073">
    <property type="entry name" value="GTP-bd"/>
</dbReference>
<dbReference type="InterPro" id="IPR014100">
    <property type="entry name" value="GTP-bd_Obg/CgtA"/>
</dbReference>
<dbReference type="InterPro" id="IPR006074">
    <property type="entry name" value="GTP1-OBG_CS"/>
</dbReference>
<dbReference type="InterPro" id="IPR006169">
    <property type="entry name" value="GTP1_OBG_dom"/>
</dbReference>
<dbReference type="InterPro" id="IPR036726">
    <property type="entry name" value="GTP1_OBG_dom_sf"/>
</dbReference>
<dbReference type="InterPro" id="IPR045086">
    <property type="entry name" value="OBG_GTPase"/>
</dbReference>
<dbReference type="InterPro" id="IPR027417">
    <property type="entry name" value="P-loop_NTPase"/>
</dbReference>
<dbReference type="NCBIfam" id="TIGR02729">
    <property type="entry name" value="Obg_CgtA"/>
    <property type="match status" value="1"/>
</dbReference>
<dbReference type="NCBIfam" id="NF008955">
    <property type="entry name" value="PRK12297.1"/>
    <property type="match status" value="1"/>
</dbReference>
<dbReference type="NCBIfam" id="NF008956">
    <property type="entry name" value="PRK12299.1"/>
    <property type="match status" value="1"/>
</dbReference>
<dbReference type="PANTHER" id="PTHR11702">
    <property type="entry name" value="DEVELOPMENTALLY REGULATED GTP-BINDING PROTEIN-RELATED"/>
    <property type="match status" value="1"/>
</dbReference>
<dbReference type="PANTHER" id="PTHR11702:SF31">
    <property type="entry name" value="MITOCHONDRIAL RIBOSOME-ASSOCIATED GTPASE 2"/>
    <property type="match status" value="1"/>
</dbReference>
<dbReference type="Pfam" id="PF01018">
    <property type="entry name" value="GTP1_OBG"/>
    <property type="match status" value="1"/>
</dbReference>
<dbReference type="Pfam" id="PF01926">
    <property type="entry name" value="MMR_HSR1"/>
    <property type="match status" value="1"/>
</dbReference>
<dbReference type="PIRSF" id="PIRSF002401">
    <property type="entry name" value="GTP_bd_Obg/CgtA"/>
    <property type="match status" value="1"/>
</dbReference>
<dbReference type="PRINTS" id="PR00326">
    <property type="entry name" value="GTP1OBG"/>
</dbReference>
<dbReference type="SUPFAM" id="SSF82051">
    <property type="entry name" value="Obg GTP-binding protein N-terminal domain"/>
    <property type="match status" value="1"/>
</dbReference>
<dbReference type="SUPFAM" id="SSF52540">
    <property type="entry name" value="P-loop containing nucleoside triphosphate hydrolases"/>
    <property type="match status" value="1"/>
</dbReference>
<dbReference type="PROSITE" id="PS51710">
    <property type="entry name" value="G_OBG"/>
    <property type="match status" value="1"/>
</dbReference>
<dbReference type="PROSITE" id="PS00905">
    <property type="entry name" value="GTP1_OBG"/>
    <property type="match status" value="1"/>
</dbReference>
<dbReference type="PROSITE" id="PS51883">
    <property type="entry name" value="OBG"/>
    <property type="match status" value="1"/>
</dbReference>
<feature type="chain" id="PRO_0000385767" description="GTPase Obg">
    <location>
        <begin position="1"/>
        <end position="341"/>
    </location>
</feature>
<feature type="domain" description="Obg" evidence="2">
    <location>
        <begin position="1"/>
        <end position="159"/>
    </location>
</feature>
<feature type="domain" description="OBG-type G" evidence="1">
    <location>
        <begin position="160"/>
        <end position="327"/>
    </location>
</feature>
<feature type="binding site" evidence="1">
    <location>
        <begin position="166"/>
        <end position="173"/>
    </location>
    <ligand>
        <name>GTP</name>
        <dbReference type="ChEBI" id="CHEBI:37565"/>
    </ligand>
</feature>
<feature type="binding site" evidence="1">
    <location>
        <position position="173"/>
    </location>
    <ligand>
        <name>Mg(2+)</name>
        <dbReference type="ChEBI" id="CHEBI:18420"/>
    </ligand>
</feature>
<feature type="binding site" evidence="1">
    <location>
        <begin position="191"/>
        <end position="195"/>
    </location>
    <ligand>
        <name>GTP</name>
        <dbReference type="ChEBI" id="CHEBI:37565"/>
    </ligand>
</feature>
<feature type="binding site" evidence="1">
    <location>
        <position position="193"/>
    </location>
    <ligand>
        <name>Mg(2+)</name>
        <dbReference type="ChEBI" id="CHEBI:18420"/>
    </ligand>
</feature>
<feature type="binding site" evidence="1">
    <location>
        <begin position="212"/>
        <end position="215"/>
    </location>
    <ligand>
        <name>GTP</name>
        <dbReference type="ChEBI" id="CHEBI:37565"/>
    </ligand>
</feature>
<feature type="binding site" evidence="1">
    <location>
        <begin position="279"/>
        <end position="282"/>
    </location>
    <ligand>
        <name>GTP</name>
        <dbReference type="ChEBI" id="CHEBI:37565"/>
    </ligand>
</feature>
<feature type="binding site" evidence="1">
    <location>
        <begin position="308"/>
        <end position="310"/>
    </location>
    <ligand>
        <name>GTP</name>
        <dbReference type="ChEBI" id="CHEBI:37565"/>
    </ligand>
</feature>
<comment type="function">
    <text evidence="1">An essential GTPase which binds GTP, GDP and possibly (p)ppGpp with moderate affinity, with high nucleotide exchange rates and a fairly low GTP hydrolysis rate. Plays a role in control of the cell cycle, stress response, ribosome biogenesis and in those bacteria that undergo differentiation, in morphogenesis control.</text>
</comment>
<comment type="cofactor">
    <cofactor evidence="1">
        <name>Mg(2+)</name>
        <dbReference type="ChEBI" id="CHEBI:18420"/>
    </cofactor>
</comment>
<comment type="subunit">
    <text evidence="1">Monomer.</text>
</comment>
<comment type="subcellular location">
    <subcellularLocation>
        <location evidence="1">Cytoplasm</location>
    </subcellularLocation>
</comment>
<comment type="similarity">
    <text evidence="1">Belongs to the TRAFAC class OBG-HflX-like GTPase superfamily. OBG GTPase family.</text>
</comment>
<accession>B2S806</accession>
<organism>
    <name type="scientific">Brucella abortus (strain S19)</name>
    <dbReference type="NCBI Taxonomy" id="430066"/>
    <lineage>
        <taxon>Bacteria</taxon>
        <taxon>Pseudomonadati</taxon>
        <taxon>Pseudomonadota</taxon>
        <taxon>Alphaproteobacteria</taxon>
        <taxon>Hyphomicrobiales</taxon>
        <taxon>Brucellaceae</taxon>
        <taxon>Brucella/Ochrobactrum group</taxon>
        <taxon>Brucella</taxon>
    </lineage>
</organism>
<evidence type="ECO:0000255" key="1">
    <source>
        <dbReference type="HAMAP-Rule" id="MF_01454"/>
    </source>
</evidence>
<evidence type="ECO:0000255" key="2">
    <source>
        <dbReference type="PROSITE-ProRule" id="PRU01231"/>
    </source>
</evidence>
<keyword id="KW-0963">Cytoplasm</keyword>
<keyword id="KW-0342">GTP-binding</keyword>
<keyword id="KW-0378">Hydrolase</keyword>
<keyword id="KW-0460">Magnesium</keyword>
<keyword id="KW-0479">Metal-binding</keyword>
<keyword id="KW-0547">Nucleotide-binding</keyword>